<comment type="function">
    <text evidence="1">Catalyzes the condensation reaction of fatty acid synthesis by the addition to an acyl acceptor of two carbons from malonyl-ACP. Catalyzes the first condensation reaction which initiates fatty acid synthesis and may therefore play a role in governing the total rate of fatty acid production. Possesses both acetoacetyl-ACP synthase and acetyl transacylase activities. Its substrate specificity determines the biosynthesis of branched-chain and/or straight-chain of fatty acids.</text>
</comment>
<comment type="catalytic activity">
    <reaction evidence="1">
        <text>malonyl-[ACP] + acetyl-CoA + H(+) = 3-oxobutanoyl-[ACP] + CO2 + CoA</text>
        <dbReference type="Rhea" id="RHEA:12080"/>
        <dbReference type="Rhea" id="RHEA-COMP:9623"/>
        <dbReference type="Rhea" id="RHEA-COMP:9625"/>
        <dbReference type="ChEBI" id="CHEBI:15378"/>
        <dbReference type="ChEBI" id="CHEBI:16526"/>
        <dbReference type="ChEBI" id="CHEBI:57287"/>
        <dbReference type="ChEBI" id="CHEBI:57288"/>
        <dbReference type="ChEBI" id="CHEBI:78449"/>
        <dbReference type="ChEBI" id="CHEBI:78450"/>
        <dbReference type="EC" id="2.3.1.180"/>
    </reaction>
</comment>
<comment type="pathway">
    <text evidence="1">Lipid metabolism; fatty acid biosynthesis.</text>
</comment>
<comment type="subunit">
    <text evidence="1">Homodimer.</text>
</comment>
<comment type="subcellular location">
    <subcellularLocation>
        <location evidence="1">Cytoplasm</location>
    </subcellularLocation>
</comment>
<comment type="domain">
    <text evidence="1">The last Arg residue of the ACP-binding site is essential for the weak association between ACP/AcpP and FabH.</text>
</comment>
<comment type="similarity">
    <text evidence="1">Belongs to the thiolase-like superfamily. FabH family.</text>
</comment>
<dbReference type="EC" id="2.3.1.180" evidence="1"/>
<dbReference type="EMBL" id="AL939125">
    <property type="protein sequence ID" value="CAA16179.1"/>
    <property type="molecule type" value="Genomic_DNA"/>
</dbReference>
<dbReference type="PIR" id="T34914">
    <property type="entry name" value="T34914"/>
</dbReference>
<dbReference type="RefSeq" id="NP_630009.1">
    <property type="nucleotide sequence ID" value="NC_003888.3"/>
</dbReference>
<dbReference type="RefSeq" id="WP_011030514.1">
    <property type="nucleotide sequence ID" value="NZ_VNID01000007.1"/>
</dbReference>
<dbReference type="SMR" id="O54151"/>
<dbReference type="STRING" id="100226.gene:17763548"/>
<dbReference type="PaxDb" id="100226-SCO5888"/>
<dbReference type="KEGG" id="sco:SCO5888"/>
<dbReference type="PATRIC" id="fig|100226.15.peg.5987"/>
<dbReference type="eggNOG" id="COG0332">
    <property type="taxonomic scope" value="Bacteria"/>
</dbReference>
<dbReference type="HOGENOM" id="CLU_039592_4_0_11"/>
<dbReference type="InParanoid" id="O54151"/>
<dbReference type="OrthoDB" id="9815506at2"/>
<dbReference type="PhylomeDB" id="O54151"/>
<dbReference type="UniPathway" id="UPA00094"/>
<dbReference type="Proteomes" id="UP000001973">
    <property type="component" value="Chromosome"/>
</dbReference>
<dbReference type="GO" id="GO:0005737">
    <property type="term" value="C:cytoplasm"/>
    <property type="evidence" value="ECO:0007669"/>
    <property type="project" value="UniProtKB-SubCell"/>
</dbReference>
<dbReference type="GO" id="GO:0004315">
    <property type="term" value="F:3-oxoacyl-[acyl-carrier-protein] synthase activity"/>
    <property type="evidence" value="ECO:0007669"/>
    <property type="project" value="InterPro"/>
</dbReference>
<dbReference type="GO" id="GO:0033818">
    <property type="term" value="F:beta-ketoacyl-acyl-carrier-protein synthase III activity"/>
    <property type="evidence" value="ECO:0007669"/>
    <property type="project" value="UniProtKB-UniRule"/>
</dbReference>
<dbReference type="GO" id="GO:0006633">
    <property type="term" value="P:fatty acid biosynthetic process"/>
    <property type="evidence" value="ECO:0007669"/>
    <property type="project" value="UniProtKB-UniRule"/>
</dbReference>
<dbReference type="GO" id="GO:0044550">
    <property type="term" value="P:secondary metabolite biosynthetic process"/>
    <property type="evidence" value="ECO:0000318"/>
    <property type="project" value="GO_Central"/>
</dbReference>
<dbReference type="CDD" id="cd00830">
    <property type="entry name" value="KAS_III"/>
    <property type="match status" value="1"/>
</dbReference>
<dbReference type="FunFam" id="3.40.47.10:FF:000004">
    <property type="entry name" value="3-oxoacyl-[acyl-carrier-protein] synthase 3"/>
    <property type="match status" value="1"/>
</dbReference>
<dbReference type="Gene3D" id="3.40.47.10">
    <property type="match status" value="1"/>
</dbReference>
<dbReference type="HAMAP" id="MF_01815">
    <property type="entry name" value="FabH"/>
    <property type="match status" value="1"/>
</dbReference>
<dbReference type="InterPro" id="IPR013747">
    <property type="entry name" value="ACP_syn_III_C"/>
</dbReference>
<dbReference type="InterPro" id="IPR013751">
    <property type="entry name" value="ACP_syn_III_N"/>
</dbReference>
<dbReference type="InterPro" id="IPR004655">
    <property type="entry name" value="FabH"/>
</dbReference>
<dbReference type="InterPro" id="IPR016039">
    <property type="entry name" value="Thiolase-like"/>
</dbReference>
<dbReference type="NCBIfam" id="TIGR00747">
    <property type="entry name" value="fabH"/>
    <property type="match status" value="1"/>
</dbReference>
<dbReference type="NCBIfam" id="NF006829">
    <property type="entry name" value="PRK09352.1"/>
    <property type="match status" value="1"/>
</dbReference>
<dbReference type="PANTHER" id="PTHR34069">
    <property type="entry name" value="3-OXOACYL-[ACYL-CARRIER-PROTEIN] SYNTHASE 3"/>
    <property type="match status" value="1"/>
</dbReference>
<dbReference type="PANTHER" id="PTHR34069:SF2">
    <property type="entry name" value="BETA-KETOACYL-[ACYL-CARRIER-PROTEIN] SYNTHASE III"/>
    <property type="match status" value="1"/>
</dbReference>
<dbReference type="Pfam" id="PF08545">
    <property type="entry name" value="ACP_syn_III"/>
    <property type="match status" value="1"/>
</dbReference>
<dbReference type="Pfam" id="PF08541">
    <property type="entry name" value="ACP_syn_III_C"/>
    <property type="match status" value="1"/>
</dbReference>
<dbReference type="SUPFAM" id="SSF53901">
    <property type="entry name" value="Thiolase-like"/>
    <property type="match status" value="1"/>
</dbReference>
<protein>
    <recommendedName>
        <fullName evidence="1">Beta-ketoacyl-[acyl-carrier-protein] synthase III 3</fullName>
        <shortName evidence="1">Beta-ketoacyl-ACP synthase III 3</shortName>
        <shortName evidence="1">KAS III 3</shortName>
        <ecNumber evidence="1">2.3.1.180</ecNumber>
    </recommendedName>
    <alternativeName>
        <fullName evidence="1">3-oxoacyl-[acyl-carrier-protein] synthase 3 3</fullName>
    </alternativeName>
    <alternativeName>
        <fullName evidence="1">3-oxoacyl-[acyl-carrier-protein] synthase III 3</fullName>
    </alternativeName>
</protein>
<feature type="chain" id="PRO_0000110485" description="Beta-ketoacyl-[acyl-carrier-protein] synthase III 3">
    <location>
        <begin position="1"/>
        <end position="335"/>
    </location>
</feature>
<feature type="region of interest" description="ACP-binding" evidence="1">
    <location>
        <begin position="257"/>
        <end position="261"/>
    </location>
</feature>
<feature type="active site" evidence="1">
    <location>
        <position position="114"/>
    </location>
</feature>
<feature type="active site" evidence="1">
    <location>
        <position position="256"/>
    </location>
</feature>
<feature type="active site" evidence="1">
    <location>
        <position position="286"/>
    </location>
</feature>
<name>FABH3_STRCO</name>
<accession>O54151</accession>
<evidence type="ECO:0000255" key="1">
    <source>
        <dbReference type="HAMAP-Rule" id="MF_01815"/>
    </source>
</evidence>
<proteinExistence type="inferred from homology"/>
<gene>
    <name evidence="1" type="primary">fabH3</name>
    <name type="ordered locus">SCO5888</name>
    <name type="ORF">SC3F7.08</name>
</gene>
<keyword id="KW-0012">Acyltransferase</keyword>
<keyword id="KW-0963">Cytoplasm</keyword>
<keyword id="KW-0275">Fatty acid biosynthesis</keyword>
<keyword id="KW-0276">Fatty acid metabolism</keyword>
<keyword id="KW-0444">Lipid biosynthesis</keyword>
<keyword id="KW-0443">Lipid metabolism</keyword>
<keyword id="KW-0511">Multifunctional enzyme</keyword>
<keyword id="KW-1185">Reference proteome</keyword>
<keyword id="KW-0808">Transferase</keyword>
<sequence length="335" mass="34697">MTRASVLTGLGSCLPSRCVTNAELERTMDTSDEWIRARTGIAQRYVAEEGTLTSDLAVGAAERALKSARLTPDEIDAVIVATTTPDRPCPATAPTVAARLGTGPVPAFDVSAVCSGFLYGLATGSGLIASGAAERVLVIGAETFSRILNPQDRSTSVIFGDGAGAVVLRAGEPGETGALGPLRLGSDGTGVDLITVPAGGPPRPGAAAPDDLADRYFTMEGKRVFWLAVQRMGECAESVLDRAGWRVADVDWLVSHQANHRITARLADEIGIPRERSVSNIAEVGNTAAASIPLALDHAHARGTLRPGDRVLLTAFGGGLTWGAAALTWPAVDPV</sequence>
<reference key="1">
    <citation type="journal article" date="2002" name="Nature">
        <title>Complete genome sequence of the model actinomycete Streptomyces coelicolor A3(2).</title>
        <authorList>
            <person name="Bentley S.D."/>
            <person name="Chater K.F."/>
            <person name="Cerdeno-Tarraga A.-M."/>
            <person name="Challis G.L."/>
            <person name="Thomson N.R."/>
            <person name="James K.D."/>
            <person name="Harris D.E."/>
            <person name="Quail M.A."/>
            <person name="Kieser H."/>
            <person name="Harper D."/>
            <person name="Bateman A."/>
            <person name="Brown S."/>
            <person name="Chandra G."/>
            <person name="Chen C.W."/>
            <person name="Collins M."/>
            <person name="Cronin A."/>
            <person name="Fraser A."/>
            <person name="Goble A."/>
            <person name="Hidalgo J."/>
            <person name="Hornsby T."/>
            <person name="Howarth S."/>
            <person name="Huang C.-H."/>
            <person name="Kieser T."/>
            <person name="Larke L."/>
            <person name="Murphy L.D."/>
            <person name="Oliver K."/>
            <person name="O'Neil S."/>
            <person name="Rabbinowitsch E."/>
            <person name="Rajandream M.A."/>
            <person name="Rutherford K.M."/>
            <person name="Rutter S."/>
            <person name="Seeger K."/>
            <person name="Saunders D."/>
            <person name="Sharp S."/>
            <person name="Squares R."/>
            <person name="Squares S."/>
            <person name="Taylor K."/>
            <person name="Warren T."/>
            <person name="Wietzorrek A."/>
            <person name="Woodward J.R."/>
            <person name="Barrell B.G."/>
            <person name="Parkhill J."/>
            <person name="Hopwood D.A."/>
        </authorList>
    </citation>
    <scope>NUCLEOTIDE SEQUENCE [LARGE SCALE GENOMIC DNA]</scope>
    <source>
        <strain>ATCC BAA-471 / A3(2) / M145</strain>
    </source>
</reference>
<organism>
    <name type="scientific">Streptomyces coelicolor (strain ATCC BAA-471 / A3(2) / M145)</name>
    <dbReference type="NCBI Taxonomy" id="100226"/>
    <lineage>
        <taxon>Bacteria</taxon>
        <taxon>Bacillati</taxon>
        <taxon>Actinomycetota</taxon>
        <taxon>Actinomycetes</taxon>
        <taxon>Kitasatosporales</taxon>
        <taxon>Streptomycetaceae</taxon>
        <taxon>Streptomyces</taxon>
        <taxon>Streptomyces albidoflavus group</taxon>
    </lineage>
</organism>